<organism>
    <name type="scientific">Rattus norvegicus</name>
    <name type="common">Rat</name>
    <dbReference type="NCBI Taxonomy" id="10116"/>
    <lineage>
        <taxon>Eukaryota</taxon>
        <taxon>Metazoa</taxon>
        <taxon>Chordata</taxon>
        <taxon>Craniata</taxon>
        <taxon>Vertebrata</taxon>
        <taxon>Euteleostomi</taxon>
        <taxon>Mammalia</taxon>
        <taxon>Eutheria</taxon>
        <taxon>Euarchontoglires</taxon>
        <taxon>Glires</taxon>
        <taxon>Rodentia</taxon>
        <taxon>Myomorpha</taxon>
        <taxon>Muroidea</taxon>
        <taxon>Muridae</taxon>
        <taxon>Murinae</taxon>
        <taxon>Rattus</taxon>
    </lineage>
</organism>
<comment type="function">
    <text>Troponin I is the inhibitory subunit of troponin, the thin filament regulatory complex which confers calcium-sensitivity to striated muscle actomyosin ATPase activity.</text>
</comment>
<comment type="subunit">
    <text evidence="1">Interacts with TRIM63 (By similarity). Binds to actin and tropomyosin. Interacts with STK4/MST1 (By similarity).</text>
</comment>
<comment type="interaction">
    <interactant intactId="EBI-10817583">
        <id>P23693</id>
    </interactant>
    <interactant intactId="EBI-10769071">
        <id>Q5VU43-11</id>
        <label>PDE4DIP</label>
    </interactant>
    <organismsDiffer>true</organismsDiffer>
    <experiments>2</experiments>
</comment>
<comment type="PTM">
    <text evidence="1">Phosphorylated at Ser-23 and Ser-24 by PRKD1; phosphorylation reduces myofilament calcium sensitivity. Phosphorylated preferentially at Thr-32. Phosphorylation by STK4/MST1 alters its binding affinity to TNNC1 (cardiac Tn-C) and TNNT2 (cardiac Tn-T). Phosphorylated at Ser-43 and Ser-45 by PRKCE; phosphorylation increases myocardium contractile dysfunction (By similarity).</text>
</comment>
<comment type="similarity">
    <text evidence="7">Belongs to the troponin I family.</text>
</comment>
<name>TNNI3_RAT</name>
<feature type="initiator methionine" description="Removed" evidence="3">
    <location>
        <position position="1"/>
    </location>
</feature>
<feature type="chain" id="PRO_0000186155" description="Troponin I, cardiac muscle">
    <location>
        <begin position="2"/>
        <end position="211"/>
    </location>
</feature>
<feature type="region of interest" description="Disordered" evidence="6">
    <location>
        <begin position="1"/>
        <end position="25"/>
    </location>
</feature>
<feature type="region of interest" description="Involved in binding TNC">
    <location>
        <begin position="33"/>
        <end position="80"/>
    </location>
</feature>
<feature type="region of interest" description="Involved in binding TNC and actin">
    <location>
        <begin position="130"/>
        <end position="151"/>
    </location>
</feature>
<feature type="site" description="Involved in TNI-TNT interactions">
    <location>
        <position position="81"/>
    </location>
</feature>
<feature type="site" description="Involved in TNI-TNT interactions">
    <location>
        <position position="98"/>
    </location>
</feature>
<feature type="modified residue" description="N-acetylalanine" evidence="3">
    <location>
        <position position="2"/>
    </location>
</feature>
<feature type="modified residue" description="Phosphoserine" evidence="4">
    <location>
        <position position="5"/>
    </location>
</feature>
<feature type="modified residue" description="Phosphoserine" evidence="8">
    <location>
        <position position="6"/>
    </location>
</feature>
<feature type="modified residue" description="Phosphoserine; by PKA and PKD/PRKD1" evidence="2">
    <location>
        <position position="23"/>
    </location>
</feature>
<feature type="modified residue" description="Phosphoserine; by PKA and PKD/PRKD1" evidence="4">
    <location>
        <position position="24"/>
    </location>
</feature>
<feature type="modified residue" description="Phosphotyrosine" evidence="4">
    <location>
        <position position="27"/>
    </location>
</feature>
<feature type="modified residue" description="Phosphothreonine; by STK4/MST1" evidence="4">
    <location>
        <position position="32"/>
    </location>
</feature>
<feature type="modified residue" description="Phosphoserine; by PKC/PRKCE" evidence="5">
    <location>
        <position position="43"/>
    </location>
</feature>
<feature type="modified residue" description="Phosphoserine; by PKC/PRKCE" evidence="5">
    <location>
        <position position="45"/>
    </location>
</feature>
<feature type="modified residue" description="Phosphothreonine; by STK4/MST1" evidence="4">
    <location>
        <position position="52"/>
    </location>
</feature>
<feature type="modified residue" description="Phosphoserine" evidence="4">
    <location>
        <position position="78"/>
    </location>
</feature>
<feature type="modified residue" description="Phosphothreonine" evidence="4">
    <location>
        <position position="79"/>
    </location>
</feature>
<feature type="modified residue" description="Phosphothreonine; by STK4/MST1" evidence="4">
    <location>
        <position position="130"/>
    </location>
</feature>
<feature type="modified residue" description="Phosphothreonine; by STK4/MST1" evidence="4">
    <location>
        <position position="144"/>
    </location>
</feature>
<feature type="modified residue" description="Phosphoserine; by PAK3" evidence="4">
    <location>
        <position position="151"/>
    </location>
</feature>
<feature type="modified residue" description="Phosphoserine" evidence="4">
    <location>
        <position position="167"/>
    </location>
</feature>
<feature type="modified residue" description="Phosphoserine" evidence="8">
    <location>
        <position position="200"/>
    </location>
</feature>
<feature type="sequence conflict" description="In Ref. 3; AAA42294." evidence="7" ref="3">
    <original>A</original>
    <variation>S</variation>
    <location>
        <position position="8"/>
    </location>
</feature>
<feature type="sequence conflict" description="In Ref. 3; AAA42294." evidence="7" ref="3">
    <original>I</original>
    <variation>T</variation>
    <location>
        <position position="182"/>
    </location>
</feature>
<accession>P23693</accession>
<accession>Q4PP23</accession>
<reference key="1">
    <citation type="journal article" date="1991" name="Biochemistry">
        <title>Molecular cloning of rat cardiac troponin I and analysis of troponin I isoform expression in developing rat heart.</title>
        <authorList>
            <person name="Murphy A.M."/>
            <person name="Jones L. II"/>
            <person name="Sims H.F."/>
            <person name="Strauss A.W."/>
        </authorList>
    </citation>
    <scope>NUCLEOTIDE SEQUENCE [MRNA]</scope>
</reference>
<reference key="2">
    <citation type="journal article" date="1991" name="Development">
        <title>Developmental expression of rat cardiac troponin I mRNA.</title>
        <authorList>
            <person name="Ausoni S."/>
            <person name="de Nardi C."/>
            <person name="Moretti P."/>
            <person name="Gorza L."/>
            <person name="Schiaffino S."/>
        </authorList>
    </citation>
    <scope>NUCLEOTIDE SEQUENCE [MRNA]</scope>
</reference>
<reference key="3">
    <citation type="journal article" date="1991" name="J. Mol. Cell. Cardiol.">
        <title>Molecular cloning and developmental expression of the rat cardiac-specific isoform of troponin I.</title>
        <authorList>
            <person name="Martin A.F."/>
            <person name="Orlowski J."/>
        </authorList>
    </citation>
    <scope>NUCLEOTIDE SEQUENCE [MRNA]</scope>
</reference>
<reference key="4">
    <citation type="journal article" date="1997" name="Biochem. J.">
        <title>Regulation of the rat cardiac troponin I gene by the transcription factor GATA-4.</title>
        <authorList>
            <person name="Murphy A.M."/>
            <person name="Thompson W.R."/>
            <person name="Peng L.F."/>
            <person name="Jones L. II"/>
        </authorList>
    </citation>
    <scope>NUCLEOTIDE SEQUENCE [GENOMIC DNA]</scope>
</reference>
<reference key="5">
    <citation type="submission" date="2005-05" db="EMBL/GenBank/DDBJ databases">
        <title>Troponin T regulates low-frequency cardiac muscle mechano-dynamics.</title>
        <authorList>
            <person name="Chandra M."/>
            <person name="Tschirgi M.L."/>
        </authorList>
    </citation>
    <scope>NUCLEOTIDE SEQUENCE [MRNA]</scope>
    <source>
        <strain>Sprague-Dawley</strain>
        <tissue>Heart muscle</tissue>
    </source>
</reference>
<reference key="6">
    <citation type="journal article" date="2004" name="Proc. Natl. Acad. Sci. U.S.A.">
        <title>Muscle-specific RING finger 1 is a bona fide ubiquitin ligase that degrades cardiac troponin I.</title>
        <authorList>
            <person name="Kedar V."/>
            <person name="McDonough H."/>
            <person name="Arya R."/>
            <person name="Li H.-H."/>
            <person name="Rockman H.A."/>
            <person name="Patterson C."/>
        </authorList>
    </citation>
    <scope>INTERACTION WITH TRIM63</scope>
</reference>
<reference key="7">
    <citation type="journal article" date="2012" name="Nat. Commun.">
        <title>Quantitative maps of protein phosphorylation sites across 14 different rat organs and tissues.</title>
        <authorList>
            <person name="Lundby A."/>
            <person name="Secher A."/>
            <person name="Lage K."/>
            <person name="Nordsborg N.B."/>
            <person name="Dmytriyev A."/>
            <person name="Lundby C."/>
            <person name="Olsen J.V."/>
        </authorList>
    </citation>
    <scope>PHOSPHORYLATION [LARGE SCALE ANALYSIS] AT SER-6 AND SER-200</scope>
    <scope>IDENTIFICATION BY MASS SPECTROMETRY [LARGE SCALE ANALYSIS]</scope>
</reference>
<sequence length="211" mass="24160">MADESSDAAGEPQPAPAPVRRRSSANYRAYATEPHAKKKSKISASRKLQLKTLMLQIAKQEMEREAEERRGEKGRVLSTRCQPLVLDGLGFEELQDLCRQLHARVDKVDEERYDVEAKVTKNITEIADLTQKIYDLRGKFKRPTLRRVRISADAMMQALLGTRAKESLDLRAHLKQVKKEDIEKENREVGDWRKNIDALSGMEGRKKKFEG</sequence>
<dbReference type="EMBL" id="M57679">
    <property type="protein sequence ID" value="AAA63504.1"/>
    <property type="molecule type" value="mRNA"/>
</dbReference>
<dbReference type="EMBL" id="X58499">
    <property type="protein sequence ID" value="CAA41402.1"/>
    <property type="molecule type" value="mRNA"/>
</dbReference>
<dbReference type="EMBL" id="M92074">
    <property type="protein sequence ID" value="AAA42294.1"/>
    <property type="molecule type" value="mRNA"/>
</dbReference>
<dbReference type="EMBL" id="U77354">
    <property type="protein sequence ID" value="AAB52234.1"/>
    <property type="molecule type" value="Genomic_DNA"/>
</dbReference>
<dbReference type="EMBL" id="DQ062462">
    <property type="protein sequence ID" value="AAY63993.1"/>
    <property type="molecule type" value="mRNA"/>
</dbReference>
<dbReference type="PIR" id="A60124">
    <property type="entry name" value="A60124"/>
</dbReference>
<dbReference type="PIR" id="I56441">
    <property type="entry name" value="I56441"/>
</dbReference>
<dbReference type="RefSeq" id="NP_058840.1">
    <property type="nucleotide sequence ID" value="NM_017144.2"/>
</dbReference>
<dbReference type="SMR" id="P23693"/>
<dbReference type="BioGRID" id="247923">
    <property type="interactions" value="3"/>
</dbReference>
<dbReference type="FunCoup" id="P23693">
    <property type="interactions" value="75"/>
</dbReference>
<dbReference type="IntAct" id="P23693">
    <property type="interactions" value="1"/>
</dbReference>
<dbReference type="STRING" id="10116.ENSRNOP00000024640"/>
<dbReference type="GlyGen" id="P23693">
    <property type="glycosylation" value="9 sites, 1 O-linked glycan (7 sites)"/>
</dbReference>
<dbReference type="iPTMnet" id="P23693"/>
<dbReference type="PhosphoSitePlus" id="P23693"/>
<dbReference type="PaxDb" id="10116-ENSRNOP00000024640"/>
<dbReference type="Ensembl" id="ENSRNOT00000024640.6">
    <property type="protein sequence ID" value="ENSRNOP00000024640.3"/>
    <property type="gene ID" value="ENSRNOG00000018250.6"/>
</dbReference>
<dbReference type="GeneID" id="29248"/>
<dbReference type="KEGG" id="rno:29248"/>
<dbReference type="UCSC" id="RGD:62052">
    <property type="organism name" value="rat"/>
</dbReference>
<dbReference type="AGR" id="RGD:62052"/>
<dbReference type="CTD" id="7137"/>
<dbReference type="RGD" id="62052">
    <property type="gene designation" value="Tnni3"/>
</dbReference>
<dbReference type="eggNOG" id="KOG3977">
    <property type="taxonomic scope" value="Eukaryota"/>
</dbReference>
<dbReference type="GeneTree" id="ENSGT01030000234588"/>
<dbReference type="HOGENOM" id="CLU_098686_1_0_1"/>
<dbReference type="InParanoid" id="P23693"/>
<dbReference type="OMA" id="MLQVAKH"/>
<dbReference type="OrthoDB" id="371899at2759"/>
<dbReference type="PhylomeDB" id="P23693"/>
<dbReference type="TreeFam" id="TF313374"/>
<dbReference type="Reactome" id="R-RNO-390522">
    <property type="pathway name" value="Striated Muscle Contraction"/>
</dbReference>
<dbReference type="Reactome" id="R-RNO-5578775">
    <property type="pathway name" value="Ion homeostasis"/>
</dbReference>
<dbReference type="PRO" id="PR:P23693"/>
<dbReference type="Proteomes" id="UP000002494">
    <property type="component" value="Chromosome 1"/>
</dbReference>
<dbReference type="Bgee" id="ENSRNOG00000018250">
    <property type="expression patterns" value="Expressed in heart and 17 other cell types or tissues"/>
</dbReference>
<dbReference type="GO" id="GO:0097512">
    <property type="term" value="C:cardiac myofibril"/>
    <property type="evidence" value="ECO:0000266"/>
    <property type="project" value="RGD"/>
</dbReference>
<dbReference type="GO" id="GO:1990584">
    <property type="term" value="C:cardiac Troponin complex"/>
    <property type="evidence" value="ECO:0000266"/>
    <property type="project" value="RGD"/>
</dbReference>
<dbReference type="GO" id="GO:0043292">
    <property type="term" value="C:contractile muscle fiber"/>
    <property type="evidence" value="ECO:0000314"/>
    <property type="project" value="RGD"/>
</dbReference>
<dbReference type="GO" id="GO:0005737">
    <property type="term" value="C:cytoplasm"/>
    <property type="evidence" value="ECO:0000314"/>
    <property type="project" value="MGI"/>
</dbReference>
<dbReference type="GO" id="GO:0030016">
    <property type="term" value="C:myofibril"/>
    <property type="evidence" value="ECO:0000314"/>
    <property type="project" value="RGD"/>
</dbReference>
<dbReference type="GO" id="GO:0030017">
    <property type="term" value="C:sarcomere"/>
    <property type="evidence" value="ECO:0000314"/>
    <property type="project" value="MGI"/>
</dbReference>
<dbReference type="GO" id="GO:0005861">
    <property type="term" value="C:troponin complex"/>
    <property type="evidence" value="ECO:0000266"/>
    <property type="project" value="RGD"/>
</dbReference>
<dbReference type="GO" id="GO:0003779">
    <property type="term" value="F:actin binding"/>
    <property type="evidence" value="ECO:0000266"/>
    <property type="project" value="RGD"/>
</dbReference>
<dbReference type="GO" id="GO:0051015">
    <property type="term" value="F:actin filament binding"/>
    <property type="evidence" value="ECO:0000266"/>
    <property type="project" value="RGD"/>
</dbReference>
<dbReference type="GO" id="GO:0019855">
    <property type="term" value="F:calcium channel inhibitor activity"/>
    <property type="evidence" value="ECO:0000266"/>
    <property type="project" value="RGD"/>
</dbReference>
<dbReference type="GO" id="GO:0048306">
    <property type="term" value="F:calcium-dependent protein binding"/>
    <property type="evidence" value="ECO:0000266"/>
    <property type="project" value="RGD"/>
</dbReference>
<dbReference type="GO" id="GO:0019904">
    <property type="term" value="F:protein domain specific binding"/>
    <property type="evidence" value="ECO:0000266"/>
    <property type="project" value="RGD"/>
</dbReference>
<dbReference type="GO" id="GO:0019901">
    <property type="term" value="F:protein kinase binding"/>
    <property type="evidence" value="ECO:0000266"/>
    <property type="project" value="RGD"/>
</dbReference>
<dbReference type="GO" id="GO:0030172">
    <property type="term" value="F:troponin C binding"/>
    <property type="evidence" value="ECO:0000266"/>
    <property type="project" value="RGD"/>
</dbReference>
<dbReference type="GO" id="GO:0031014">
    <property type="term" value="F:troponin T binding"/>
    <property type="evidence" value="ECO:0000266"/>
    <property type="project" value="RGD"/>
</dbReference>
<dbReference type="GO" id="GO:0060048">
    <property type="term" value="P:cardiac muscle contraction"/>
    <property type="evidence" value="ECO:0000314"/>
    <property type="project" value="RGD"/>
</dbReference>
<dbReference type="GO" id="GO:0060047">
    <property type="term" value="P:heart contraction"/>
    <property type="evidence" value="ECO:0000266"/>
    <property type="project" value="RGD"/>
</dbReference>
<dbReference type="GO" id="GO:0007507">
    <property type="term" value="P:heart development"/>
    <property type="evidence" value="ECO:0000266"/>
    <property type="project" value="RGD"/>
</dbReference>
<dbReference type="GO" id="GO:0006874">
    <property type="term" value="P:intracellular calcium ion homeostasis"/>
    <property type="evidence" value="ECO:0000266"/>
    <property type="project" value="RGD"/>
</dbReference>
<dbReference type="GO" id="GO:0010882">
    <property type="term" value="P:regulation of cardiac muscle contraction by calcium ion signaling"/>
    <property type="evidence" value="ECO:0000266"/>
    <property type="project" value="RGD"/>
</dbReference>
<dbReference type="GO" id="GO:0006937">
    <property type="term" value="P:regulation of muscle contraction"/>
    <property type="evidence" value="ECO:0000266"/>
    <property type="project" value="RGD"/>
</dbReference>
<dbReference type="GO" id="GO:0006940">
    <property type="term" value="P:regulation of smooth muscle contraction"/>
    <property type="evidence" value="ECO:0000315"/>
    <property type="project" value="RGD"/>
</dbReference>
<dbReference type="GO" id="GO:0001980">
    <property type="term" value="P:regulation of systemic arterial blood pressure by ischemic conditions"/>
    <property type="evidence" value="ECO:0000266"/>
    <property type="project" value="RGD"/>
</dbReference>
<dbReference type="GO" id="GO:0003009">
    <property type="term" value="P:skeletal muscle contraction"/>
    <property type="evidence" value="ECO:0000318"/>
    <property type="project" value="GO_Central"/>
</dbReference>
<dbReference type="GO" id="GO:0006941">
    <property type="term" value="P:striated muscle contraction"/>
    <property type="evidence" value="ECO:0000266"/>
    <property type="project" value="RGD"/>
</dbReference>
<dbReference type="GO" id="GO:0001570">
    <property type="term" value="P:vasculogenesis"/>
    <property type="evidence" value="ECO:0000266"/>
    <property type="project" value="RGD"/>
</dbReference>
<dbReference type="GO" id="GO:0055010">
    <property type="term" value="P:ventricular cardiac muscle tissue morphogenesis"/>
    <property type="evidence" value="ECO:0000266"/>
    <property type="project" value="RGD"/>
</dbReference>
<dbReference type="FunFam" id="1.20.5.350:FF:000002">
    <property type="entry name" value="troponin I, fast skeletal muscle"/>
    <property type="match status" value="1"/>
</dbReference>
<dbReference type="Gene3D" id="1.20.5.350">
    <property type="match status" value="1"/>
</dbReference>
<dbReference type="Gene3D" id="6.10.250.180">
    <property type="match status" value="1"/>
</dbReference>
<dbReference type="InterPro" id="IPR001978">
    <property type="entry name" value="Troponin"/>
</dbReference>
<dbReference type="InterPro" id="IPR021666">
    <property type="entry name" value="Troponin-I_N"/>
</dbReference>
<dbReference type="InterPro" id="IPR050875">
    <property type="entry name" value="Troponin_I"/>
</dbReference>
<dbReference type="InterPro" id="IPR038077">
    <property type="entry name" value="Troponin_sf"/>
</dbReference>
<dbReference type="PANTHER" id="PTHR13738">
    <property type="entry name" value="TROPONIN I"/>
    <property type="match status" value="1"/>
</dbReference>
<dbReference type="PANTHER" id="PTHR13738:SF2">
    <property type="entry name" value="TROPONIN I, CARDIAC MUSCLE"/>
    <property type="match status" value="1"/>
</dbReference>
<dbReference type="Pfam" id="PF00992">
    <property type="entry name" value="Troponin"/>
    <property type="match status" value="1"/>
</dbReference>
<dbReference type="Pfam" id="PF11636">
    <property type="entry name" value="Troponin-I_N"/>
    <property type="match status" value="1"/>
</dbReference>
<dbReference type="SUPFAM" id="SSF90250">
    <property type="entry name" value="Troponin coil-coiled subunits"/>
    <property type="match status" value="1"/>
</dbReference>
<gene>
    <name type="primary">Tnni3</name>
    <name type="synonym">Ctni</name>
    <name type="synonym">Tni</name>
</gene>
<proteinExistence type="evidence at protein level"/>
<protein>
    <recommendedName>
        <fullName>Troponin I, cardiac muscle</fullName>
    </recommendedName>
    <alternativeName>
        <fullName>Cardiac troponin I</fullName>
    </alternativeName>
</protein>
<keyword id="KW-0007">Acetylation</keyword>
<keyword id="KW-0009">Actin-binding</keyword>
<keyword id="KW-0514">Muscle protein</keyword>
<keyword id="KW-0597">Phosphoprotein</keyword>
<keyword id="KW-1185">Reference proteome</keyword>
<evidence type="ECO:0000250" key="1"/>
<evidence type="ECO:0000250" key="2">
    <source>
        <dbReference type="UniProtKB" id="P02646"/>
    </source>
</evidence>
<evidence type="ECO:0000250" key="3">
    <source>
        <dbReference type="UniProtKB" id="P08057"/>
    </source>
</evidence>
<evidence type="ECO:0000250" key="4">
    <source>
        <dbReference type="UniProtKB" id="P19429"/>
    </source>
</evidence>
<evidence type="ECO:0000250" key="5">
    <source>
        <dbReference type="UniProtKB" id="P48787"/>
    </source>
</evidence>
<evidence type="ECO:0000256" key="6">
    <source>
        <dbReference type="SAM" id="MobiDB-lite"/>
    </source>
</evidence>
<evidence type="ECO:0000305" key="7"/>
<evidence type="ECO:0007744" key="8">
    <source>
    </source>
</evidence>